<protein>
    <recommendedName>
        <fullName>Probable serine/threonine-protein kinase DDB_G0267514</fullName>
        <ecNumber>2.7.11.1</ecNumber>
    </recommendedName>
</protein>
<name>Y9955_DICDI</name>
<gene>
    <name type="ORF">DDB_G0267514</name>
</gene>
<reference key="1">
    <citation type="journal article" date="2005" name="Nature">
        <title>The genome of the social amoeba Dictyostelium discoideum.</title>
        <authorList>
            <person name="Eichinger L."/>
            <person name="Pachebat J.A."/>
            <person name="Gloeckner G."/>
            <person name="Rajandream M.A."/>
            <person name="Sucgang R."/>
            <person name="Berriman M."/>
            <person name="Song J."/>
            <person name="Olsen R."/>
            <person name="Szafranski K."/>
            <person name="Xu Q."/>
            <person name="Tunggal B."/>
            <person name="Kummerfeld S."/>
            <person name="Madera M."/>
            <person name="Konfortov B.A."/>
            <person name="Rivero F."/>
            <person name="Bankier A.T."/>
            <person name="Lehmann R."/>
            <person name="Hamlin N."/>
            <person name="Davies R."/>
            <person name="Gaudet P."/>
            <person name="Fey P."/>
            <person name="Pilcher K."/>
            <person name="Chen G."/>
            <person name="Saunders D."/>
            <person name="Sodergren E.J."/>
            <person name="Davis P."/>
            <person name="Kerhornou A."/>
            <person name="Nie X."/>
            <person name="Hall N."/>
            <person name="Anjard C."/>
            <person name="Hemphill L."/>
            <person name="Bason N."/>
            <person name="Farbrother P."/>
            <person name="Desany B."/>
            <person name="Just E."/>
            <person name="Morio T."/>
            <person name="Rost R."/>
            <person name="Churcher C.M."/>
            <person name="Cooper J."/>
            <person name="Haydock S."/>
            <person name="van Driessche N."/>
            <person name="Cronin A."/>
            <person name="Goodhead I."/>
            <person name="Muzny D.M."/>
            <person name="Mourier T."/>
            <person name="Pain A."/>
            <person name="Lu M."/>
            <person name="Harper D."/>
            <person name="Lindsay R."/>
            <person name="Hauser H."/>
            <person name="James K.D."/>
            <person name="Quiles M."/>
            <person name="Madan Babu M."/>
            <person name="Saito T."/>
            <person name="Buchrieser C."/>
            <person name="Wardroper A."/>
            <person name="Felder M."/>
            <person name="Thangavelu M."/>
            <person name="Johnson D."/>
            <person name="Knights A."/>
            <person name="Loulseged H."/>
            <person name="Mungall K.L."/>
            <person name="Oliver K."/>
            <person name="Price C."/>
            <person name="Quail M.A."/>
            <person name="Urushihara H."/>
            <person name="Hernandez J."/>
            <person name="Rabbinowitsch E."/>
            <person name="Steffen D."/>
            <person name="Sanders M."/>
            <person name="Ma J."/>
            <person name="Kohara Y."/>
            <person name="Sharp S."/>
            <person name="Simmonds M.N."/>
            <person name="Spiegler S."/>
            <person name="Tivey A."/>
            <person name="Sugano S."/>
            <person name="White B."/>
            <person name="Walker D."/>
            <person name="Woodward J.R."/>
            <person name="Winckler T."/>
            <person name="Tanaka Y."/>
            <person name="Shaulsky G."/>
            <person name="Schleicher M."/>
            <person name="Weinstock G.M."/>
            <person name="Rosenthal A."/>
            <person name="Cox E.C."/>
            <person name="Chisholm R.L."/>
            <person name="Gibbs R.A."/>
            <person name="Loomis W.F."/>
            <person name="Platzer M."/>
            <person name="Kay R.R."/>
            <person name="Williams J.G."/>
            <person name="Dear P.H."/>
            <person name="Noegel A.A."/>
            <person name="Barrell B.G."/>
            <person name="Kuspa A."/>
        </authorList>
    </citation>
    <scope>NUCLEOTIDE SEQUENCE [LARGE SCALE GENOMIC DNA]</scope>
    <source>
        <strain>AX4</strain>
    </source>
</reference>
<keyword id="KW-0067">ATP-binding</keyword>
<keyword id="KW-0418">Kinase</keyword>
<keyword id="KW-0547">Nucleotide-binding</keyword>
<keyword id="KW-1185">Reference proteome</keyword>
<keyword id="KW-0723">Serine/threonine-protein kinase</keyword>
<keyword id="KW-0808">Transferase</keyword>
<comment type="catalytic activity">
    <reaction>
        <text>L-seryl-[protein] + ATP = O-phospho-L-seryl-[protein] + ADP + H(+)</text>
        <dbReference type="Rhea" id="RHEA:17989"/>
        <dbReference type="Rhea" id="RHEA-COMP:9863"/>
        <dbReference type="Rhea" id="RHEA-COMP:11604"/>
        <dbReference type="ChEBI" id="CHEBI:15378"/>
        <dbReference type="ChEBI" id="CHEBI:29999"/>
        <dbReference type="ChEBI" id="CHEBI:30616"/>
        <dbReference type="ChEBI" id="CHEBI:83421"/>
        <dbReference type="ChEBI" id="CHEBI:456216"/>
        <dbReference type="EC" id="2.7.11.1"/>
    </reaction>
</comment>
<comment type="catalytic activity">
    <reaction>
        <text>L-threonyl-[protein] + ATP = O-phospho-L-threonyl-[protein] + ADP + H(+)</text>
        <dbReference type="Rhea" id="RHEA:46608"/>
        <dbReference type="Rhea" id="RHEA-COMP:11060"/>
        <dbReference type="Rhea" id="RHEA-COMP:11605"/>
        <dbReference type="ChEBI" id="CHEBI:15378"/>
        <dbReference type="ChEBI" id="CHEBI:30013"/>
        <dbReference type="ChEBI" id="CHEBI:30616"/>
        <dbReference type="ChEBI" id="CHEBI:61977"/>
        <dbReference type="ChEBI" id="CHEBI:456216"/>
        <dbReference type="EC" id="2.7.11.1"/>
    </reaction>
</comment>
<comment type="similarity">
    <text evidence="4">Belongs to the protein kinase superfamily. TKL Ser/Thr protein kinase family.</text>
</comment>
<evidence type="ECO:0000255" key="1">
    <source>
        <dbReference type="PROSITE-ProRule" id="PRU00159"/>
    </source>
</evidence>
<evidence type="ECO:0000255" key="2">
    <source>
        <dbReference type="PROSITE-ProRule" id="PRU10027"/>
    </source>
</evidence>
<evidence type="ECO:0000256" key="3">
    <source>
        <dbReference type="SAM" id="MobiDB-lite"/>
    </source>
</evidence>
<evidence type="ECO:0000305" key="4"/>
<sequence length="916" mass="103257">MKGGGFYQNQYLVPNVYFGNSSPVIAPIGGNALNNNNNNNNNNNNNGNNNNGININISNFQHQQHQIHQQHFGGLSPNMNQNHIIQHISHHQHQQAQQIQIIQNNNQPQPQQHQIQHQQQQQQQIQQQIQQQQIQQQQIQQQQIQQQQQQQIQQQQQQSKMNFIRGHHQRNSSFDEFSLSDVSVGSFKDMGWEEIYFCYHHFTQMDEGKGYLKSFQQLIRYITGLYPDISPSPNSQFLFSLGLLYPNALPQVQSPNMILSLTLKQMIETYSYTKSMVYSGSGSGGGNSGSGGGNSGSGGSSGNGTSGSGGSNNGSTIIINNTNLNNINNNNNTNNNNTNNINIPSTPPILRSLANGASSTNINIRKFSPQQACHIIDVFNSVKDNKTGGVSTLKLSLFGADASLLPLTTLPFHEFVQYIGLNIIPFENLFKPPPPPSSQLQSSPPIESQHLFLSEIDELTNNNQNNQNNNQQQQQYQQQQHHQQQQQQYQQQPQPQPQPQHQPFIYFEDTSNNNSPLDGNFNNSFGLFNNNNVVNHSPLGNNILNNIQQFNNQNNNQNNNNNNNNNNNNNNNNNNNNNNNNNNNNNNNNNHNNNNHNNNNNNNNQNNIFNHNQNQNNHLINNHSPNQYNNQGNILKNSGSVVEPPSQQQQYFSDIEISFSELKISSKLGEGTFGVVYKGLWRGSSVAIKQIKINEDVNNQVLEEFRKELTILSRLRHPNIVLLMAACTAPPNLCFITEYLPGGSLYDALHSKKIKMNMQLYKKLAIQIAQGMNYLHLSGVIHRDIKSLNLLLDEHMNVKICDFGLSKLKSKSTEMTKSIGSPIWMSPELLMGEDYTEKVDVYAFGIILWELGTGELPYSGLDSVQLALAVTTKSLRPPIPNAWPYQLSHLIQACWHQDPLKRPSFTEILNLLNEIP</sequence>
<organism>
    <name type="scientific">Dictyostelium discoideum</name>
    <name type="common">Social amoeba</name>
    <dbReference type="NCBI Taxonomy" id="44689"/>
    <lineage>
        <taxon>Eukaryota</taxon>
        <taxon>Amoebozoa</taxon>
        <taxon>Evosea</taxon>
        <taxon>Eumycetozoa</taxon>
        <taxon>Dictyostelia</taxon>
        <taxon>Dictyosteliales</taxon>
        <taxon>Dictyosteliaceae</taxon>
        <taxon>Dictyostelium</taxon>
    </lineage>
</organism>
<feature type="chain" id="PRO_0000355167" description="Probable serine/threonine-protein kinase DDB_G0267514">
    <location>
        <begin position="1"/>
        <end position="916"/>
    </location>
</feature>
<feature type="domain" description="Protein kinase" evidence="1">
    <location>
        <begin position="662"/>
        <end position="916"/>
    </location>
</feature>
<feature type="region of interest" description="Disordered" evidence="3">
    <location>
        <begin position="283"/>
        <end position="311"/>
    </location>
</feature>
<feature type="region of interest" description="Disordered" evidence="3">
    <location>
        <begin position="461"/>
        <end position="518"/>
    </location>
</feature>
<feature type="region of interest" description="Disordered" evidence="3">
    <location>
        <begin position="550"/>
        <end position="646"/>
    </location>
</feature>
<feature type="compositionally biased region" description="Low complexity" evidence="3">
    <location>
        <begin position="461"/>
        <end position="493"/>
    </location>
</feature>
<feature type="compositionally biased region" description="Low complexity" evidence="3">
    <location>
        <begin position="550"/>
        <end position="622"/>
    </location>
</feature>
<feature type="compositionally biased region" description="Polar residues" evidence="3">
    <location>
        <begin position="623"/>
        <end position="646"/>
    </location>
</feature>
<feature type="active site" description="Proton acceptor" evidence="1 2">
    <location>
        <position position="784"/>
    </location>
</feature>
<feature type="binding site" evidence="1">
    <location>
        <begin position="668"/>
        <end position="676"/>
    </location>
    <ligand>
        <name>ATP</name>
        <dbReference type="ChEBI" id="CHEBI:30616"/>
    </ligand>
</feature>
<feature type="binding site" evidence="1">
    <location>
        <position position="689"/>
    </location>
    <ligand>
        <name>ATP</name>
        <dbReference type="ChEBI" id="CHEBI:30616"/>
    </ligand>
</feature>
<accession>Q55GU0</accession>
<proteinExistence type="inferred from homology"/>
<dbReference type="EC" id="2.7.11.1"/>
<dbReference type="EMBL" id="AAFI02000003">
    <property type="protein sequence ID" value="EAL73210.1"/>
    <property type="molecule type" value="Genomic_DNA"/>
</dbReference>
<dbReference type="RefSeq" id="XP_647094.1">
    <property type="nucleotide sequence ID" value="XM_642002.1"/>
</dbReference>
<dbReference type="SMR" id="Q55GU0"/>
<dbReference type="FunCoup" id="Q55GU0">
    <property type="interactions" value="470"/>
</dbReference>
<dbReference type="STRING" id="44689.Q55GU0"/>
<dbReference type="PaxDb" id="44689-DDB0229955"/>
<dbReference type="EnsemblProtists" id="EAL73210">
    <property type="protein sequence ID" value="EAL73210"/>
    <property type="gene ID" value="DDB_G0267514"/>
</dbReference>
<dbReference type="GeneID" id="8615898"/>
<dbReference type="KEGG" id="ddi:DDB_G0267514"/>
<dbReference type="dictyBase" id="DDB_G0267514"/>
<dbReference type="VEuPathDB" id="AmoebaDB:DDB_G0267514"/>
<dbReference type="eggNOG" id="KOG0192">
    <property type="taxonomic scope" value="Eukaryota"/>
</dbReference>
<dbReference type="HOGENOM" id="CLU_317952_0_0_1"/>
<dbReference type="InParanoid" id="Q55GU0"/>
<dbReference type="OMA" id="SPIWMSP"/>
<dbReference type="Reactome" id="R-DDI-5675482">
    <property type="pathway name" value="Regulation of necroptotic cell death"/>
</dbReference>
<dbReference type="PRO" id="PR:Q55GU0"/>
<dbReference type="Proteomes" id="UP000002195">
    <property type="component" value="Chromosome 1"/>
</dbReference>
<dbReference type="GO" id="GO:0005737">
    <property type="term" value="C:cytoplasm"/>
    <property type="evidence" value="ECO:0000318"/>
    <property type="project" value="GO_Central"/>
</dbReference>
<dbReference type="GO" id="GO:0005524">
    <property type="term" value="F:ATP binding"/>
    <property type="evidence" value="ECO:0007669"/>
    <property type="project" value="UniProtKB-KW"/>
</dbReference>
<dbReference type="GO" id="GO:0004672">
    <property type="term" value="F:protein kinase activity"/>
    <property type="evidence" value="ECO:0000318"/>
    <property type="project" value="GO_Central"/>
</dbReference>
<dbReference type="GO" id="GO:0106310">
    <property type="term" value="F:protein serine kinase activity"/>
    <property type="evidence" value="ECO:0007669"/>
    <property type="project" value="RHEA"/>
</dbReference>
<dbReference type="GO" id="GO:0004674">
    <property type="term" value="F:protein serine/threonine kinase activity"/>
    <property type="evidence" value="ECO:0007669"/>
    <property type="project" value="UniProtKB-KW"/>
</dbReference>
<dbReference type="GO" id="GO:0007165">
    <property type="term" value="P:signal transduction"/>
    <property type="evidence" value="ECO:0000318"/>
    <property type="project" value="GO_Central"/>
</dbReference>
<dbReference type="CDD" id="cd13999">
    <property type="entry name" value="STKc_MAP3K-like"/>
    <property type="match status" value="1"/>
</dbReference>
<dbReference type="FunFam" id="3.30.200.20:FF:000060">
    <property type="entry name" value="Serine/threonine-protein kinase isoform 1"/>
    <property type="match status" value="1"/>
</dbReference>
<dbReference type="Gene3D" id="3.30.200.20">
    <property type="entry name" value="Phosphorylase Kinase, domain 1"/>
    <property type="match status" value="1"/>
</dbReference>
<dbReference type="Gene3D" id="1.10.510.10">
    <property type="entry name" value="Transferase(Phosphotransferase) domain 1"/>
    <property type="match status" value="1"/>
</dbReference>
<dbReference type="InterPro" id="IPR011009">
    <property type="entry name" value="Kinase-like_dom_sf"/>
</dbReference>
<dbReference type="InterPro" id="IPR000719">
    <property type="entry name" value="Prot_kinase_dom"/>
</dbReference>
<dbReference type="InterPro" id="IPR017441">
    <property type="entry name" value="Protein_kinase_ATP_BS"/>
</dbReference>
<dbReference type="InterPro" id="IPR001245">
    <property type="entry name" value="Ser-Thr/Tyr_kinase_cat_dom"/>
</dbReference>
<dbReference type="InterPro" id="IPR008271">
    <property type="entry name" value="Ser/Thr_kinase_AS"/>
</dbReference>
<dbReference type="InterPro" id="IPR051681">
    <property type="entry name" value="Ser/Thr_Kinases-Pseudokinases"/>
</dbReference>
<dbReference type="PANTHER" id="PTHR44329:SF298">
    <property type="entry name" value="MIXED LINEAGE KINASE DOMAIN-LIKE PROTEIN"/>
    <property type="match status" value="1"/>
</dbReference>
<dbReference type="PANTHER" id="PTHR44329">
    <property type="entry name" value="SERINE/THREONINE-PROTEIN KINASE TNNI3K-RELATED"/>
    <property type="match status" value="1"/>
</dbReference>
<dbReference type="Pfam" id="PF07714">
    <property type="entry name" value="PK_Tyr_Ser-Thr"/>
    <property type="match status" value="1"/>
</dbReference>
<dbReference type="PRINTS" id="PR00109">
    <property type="entry name" value="TYRKINASE"/>
</dbReference>
<dbReference type="SMART" id="SM00220">
    <property type="entry name" value="S_TKc"/>
    <property type="match status" value="1"/>
</dbReference>
<dbReference type="SUPFAM" id="SSF56112">
    <property type="entry name" value="Protein kinase-like (PK-like)"/>
    <property type="match status" value="1"/>
</dbReference>
<dbReference type="PROSITE" id="PS00107">
    <property type="entry name" value="PROTEIN_KINASE_ATP"/>
    <property type="match status" value="1"/>
</dbReference>
<dbReference type="PROSITE" id="PS50011">
    <property type="entry name" value="PROTEIN_KINASE_DOM"/>
    <property type="match status" value="1"/>
</dbReference>
<dbReference type="PROSITE" id="PS00108">
    <property type="entry name" value="PROTEIN_KINASE_ST"/>
    <property type="match status" value="1"/>
</dbReference>